<feature type="chain" id="PRO_0000420857" description="Acidic phospholipase A2 homolog cannitoxin gamma chain">
    <location>
        <begin position="1"/>
        <end position="30" status="greater than"/>
    </location>
</feature>
<feature type="disulfide bond" evidence="1">
    <location>
        <begin position="19"/>
        <end status="unknown"/>
    </location>
</feature>
<feature type="disulfide bond" evidence="3">
    <location>
        <begin position="27"/>
        <end status="unknown"/>
    </location>
</feature>
<feature type="unsure residue" description="Assigned by comparison with orthologs">
    <location>
        <begin position="26"/>
        <end position="30"/>
    </location>
</feature>
<feature type="non-terminal residue">
    <location>
        <position position="30"/>
    </location>
</feature>
<keyword id="KW-0903">Direct protein sequencing</keyword>
<keyword id="KW-1015">Disulfide bond</keyword>
<keyword id="KW-0325">Glycoprotein</keyword>
<keyword id="KW-0964">Secreted</keyword>
<reference key="1">
    <citation type="journal article" date="2005" name="J. Pharmacol. Exp. Ther.">
        <title>Isolation and pharmacological characterization of cannitoxin, a presynaptic neurotoxin from the venom of the Papuan Taipan (Oxyuranus scutellatus canni).</title>
        <authorList>
            <person name="Kuruppu S."/>
            <person name="Reeve S."/>
            <person name="Banerjee Y."/>
            <person name="Kini R.M."/>
            <person name="Smith A.I."/>
            <person name="Hodgson W.C."/>
        </authorList>
    </citation>
    <scope>PROTEIN SEQUENCE</scope>
    <scope>FUNCTION</scope>
    <scope>MASS SPECTROMETRY</scope>
    <scope>PTM</scope>
    <source>
        <tissue>Venom</tissue>
    </source>
</reference>
<accession>P0DKU0</accession>
<evidence type="ECO:0000250" key="1"/>
<evidence type="ECO:0000269" key="2">
    <source>
    </source>
</evidence>
<evidence type="ECO:0000305" key="3"/>
<proteinExistence type="evidence at protein level"/>
<name>PA2HG_OXYSA</name>
<sequence>SEIPQPSLDFEQFSNMIQCTIPPGEECLAY</sequence>
<organism>
    <name type="scientific">Oxyuranus scutellatus canni</name>
    <name type="common">Papuan taipan</name>
    <dbReference type="NCBI Taxonomy" id="183720"/>
    <lineage>
        <taxon>Eukaryota</taxon>
        <taxon>Metazoa</taxon>
        <taxon>Chordata</taxon>
        <taxon>Craniata</taxon>
        <taxon>Vertebrata</taxon>
        <taxon>Euteleostomi</taxon>
        <taxon>Lepidosauria</taxon>
        <taxon>Squamata</taxon>
        <taxon>Bifurcata</taxon>
        <taxon>Unidentata</taxon>
        <taxon>Episquamata</taxon>
        <taxon>Toxicofera</taxon>
        <taxon>Serpentes</taxon>
        <taxon>Colubroidea</taxon>
        <taxon>Elapidae</taxon>
        <taxon>Hydrophiinae</taxon>
        <taxon>Oxyuranus</taxon>
    </lineage>
</organism>
<comment type="function">
    <text evidence="1 2">Heterotrimer: Snake venom phospholipase A2 (PLA2) heterotrimer that acts as a potent presynaptic neurotoxin by blocking synaptic transmission and synaptic vesicle recycling. Enzymatic activity is essential for the neurotoxic effects (PubMed:16135698). May act by binding in a calcium-dependent fashion to neurotonal pentraxin-1 (NPTX1) and neurotonal pentraxin-2 (NPTX2), but not to neuronal pentraxin receptor (NPTXR). Also binds to taipoxin-associated calcium binding protein 49 (RCN2), a protein localized in the lumen of endoplasmic reticulum (By similarity).</text>
</comment>
<comment type="function">
    <text evidence="1 2">Monomer (gamma chain): Snake venom phospholipase A2 homolog that is neither toxic nor enzymatically active (PubMed:16135698). Does not bind calcium (By similarity).</text>
</comment>
<comment type="subunit">
    <text>Heterotrimer of alpha, beta, and gamma chains; non-covalently linked.</text>
</comment>
<comment type="subcellular location">
    <subcellularLocation>
        <location>Secreted</location>
    </subcellularLocation>
</comment>
<comment type="tissue specificity">
    <text>Expressed by the venom gland.</text>
</comment>
<comment type="PTM">
    <text>Glycosylated.</text>
</comment>
<comment type="mass spectrometry"/>
<comment type="similarity">
    <text evidence="3">Belongs to the phospholipase A2 family. Group I subfamily. D49 sub-subfamily.</text>
</comment>
<protein>
    <recommendedName>
        <fullName>Acidic phospholipase A2 homolog cannitoxin gamma chain</fullName>
        <shortName>svPLA2 homolog</shortName>
    </recommendedName>
</protein>
<dbReference type="SMR" id="P0DKU0"/>
<dbReference type="GO" id="GO:0005576">
    <property type="term" value="C:extracellular region"/>
    <property type="evidence" value="ECO:0007669"/>
    <property type="project" value="UniProtKB-SubCell"/>
</dbReference>